<proteinExistence type="inferred from homology"/>
<organism>
    <name type="scientific">Anaeromyxobacter dehalogenans (strain 2CP-1 / ATCC BAA-258)</name>
    <dbReference type="NCBI Taxonomy" id="455488"/>
    <lineage>
        <taxon>Bacteria</taxon>
        <taxon>Pseudomonadati</taxon>
        <taxon>Myxococcota</taxon>
        <taxon>Myxococcia</taxon>
        <taxon>Myxococcales</taxon>
        <taxon>Cystobacterineae</taxon>
        <taxon>Anaeromyxobacteraceae</taxon>
        <taxon>Anaeromyxobacter</taxon>
    </lineage>
</organism>
<accession>B8JDF0</accession>
<reference key="1">
    <citation type="submission" date="2009-01" db="EMBL/GenBank/DDBJ databases">
        <title>Complete sequence of Anaeromyxobacter dehalogenans 2CP-1.</title>
        <authorList>
            <person name="Lucas S."/>
            <person name="Copeland A."/>
            <person name="Lapidus A."/>
            <person name="Glavina del Rio T."/>
            <person name="Dalin E."/>
            <person name="Tice H."/>
            <person name="Bruce D."/>
            <person name="Goodwin L."/>
            <person name="Pitluck S."/>
            <person name="Saunders E."/>
            <person name="Brettin T."/>
            <person name="Detter J.C."/>
            <person name="Han C."/>
            <person name="Larimer F."/>
            <person name="Land M."/>
            <person name="Hauser L."/>
            <person name="Kyrpides N."/>
            <person name="Ovchinnikova G."/>
            <person name="Beliaev A.S."/>
            <person name="Richardson P."/>
        </authorList>
    </citation>
    <scope>NUCLEOTIDE SEQUENCE [LARGE SCALE GENOMIC DNA]</scope>
    <source>
        <strain>2CP-1 / ATCC BAA-258</strain>
    </source>
</reference>
<protein>
    <recommendedName>
        <fullName evidence="1">Dihydroorotate dehydrogenase (quinone)</fullName>
        <ecNumber evidence="1">1.3.5.2</ecNumber>
    </recommendedName>
    <alternativeName>
        <fullName evidence="1">DHOdehase</fullName>
        <shortName evidence="1">DHOD</shortName>
        <shortName evidence="1">DHODase</shortName>
    </alternativeName>
    <alternativeName>
        <fullName evidence="1">Dihydroorotate oxidase</fullName>
    </alternativeName>
</protein>
<keyword id="KW-1003">Cell membrane</keyword>
<keyword id="KW-0285">Flavoprotein</keyword>
<keyword id="KW-0288">FMN</keyword>
<keyword id="KW-0472">Membrane</keyword>
<keyword id="KW-0560">Oxidoreductase</keyword>
<keyword id="KW-0665">Pyrimidine biosynthesis</keyword>
<evidence type="ECO:0000255" key="1">
    <source>
        <dbReference type="HAMAP-Rule" id="MF_00225"/>
    </source>
</evidence>
<name>PYRD_ANAD2</name>
<gene>
    <name evidence="1" type="primary">pyrD</name>
    <name type="ordered locus">A2cp1_2662</name>
</gene>
<comment type="function">
    <text evidence="1">Catalyzes the conversion of dihydroorotate to orotate with quinone as electron acceptor.</text>
</comment>
<comment type="catalytic activity">
    <reaction evidence="1">
        <text>(S)-dihydroorotate + a quinone = orotate + a quinol</text>
        <dbReference type="Rhea" id="RHEA:30187"/>
        <dbReference type="ChEBI" id="CHEBI:24646"/>
        <dbReference type="ChEBI" id="CHEBI:30839"/>
        <dbReference type="ChEBI" id="CHEBI:30864"/>
        <dbReference type="ChEBI" id="CHEBI:132124"/>
        <dbReference type="EC" id="1.3.5.2"/>
    </reaction>
</comment>
<comment type="cofactor">
    <cofactor evidence="1">
        <name>FMN</name>
        <dbReference type="ChEBI" id="CHEBI:58210"/>
    </cofactor>
    <text evidence="1">Binds 1 FMN per subunit.</text>
</comment>
<comment type="pathway">
    <text evidence="1">Pyrimidine metabolism; UMP biosynthesis via de novo pathway; orotate from (S)-dihydroorotate (quinone route): step 1/1.</text>
</comment>
<comment type="subunit">
    <text evidence="1">Monomer.</text>
</comment>
<comment type="subcellular location">
    <subcellularLocation>
        <location evidence="1">Cell membrane</location>
        <topology evidence="1">Peripheral membrane protein</topology>
    </subcellularLocation>
</comment>
<comment type="similarity">
    <text evidence="1">Belongs to the dihydroorotate dehydrogenase family. Type 2 subfamily.</text>
</comment>
<sequence>MLWPALRSVLFQLDPERVHHLAHWALHRVPLAVARARRPASIPALAVRCMGLDFDGPVGLAAGFDKGDVALPGLFGLGFSHVEIGTITPRPQPGNDRPRLFRLPEHRALLNRMGFNNEGMEACARRLAALPPAARLGPVGINVGKNKVTPNEDAAADYLACIERLHPYADYLVVNISSPNTPGLRQLQERDALDRLLRACVRHLAERAPGKPLLVKLAPDLSPEALDEAVDVAIAAGAAGIVATNTTLSRAGVERHPRAAEAGGLSGAPLERLATDVVRRCYARAAGRVPIVGVGGVMDAEGAYAKIRAGATLVQAYTGLIYGGPAFVGRVNAGLARLLERDGFSTLSDAVGADHRQGGGKAAG</sequence>
<dbReference type="EC" id="1.3.5.2" evidence="1"/>
<dbReference type="EMBL" id="CP001359">
    <property type="protein sequence ID" value="ACL65999.1"/>
    <property type="molecule type" value="Genomic_DNA"/>
</dbReference>
<dbReference type="RefSeq" id="WP_012633778.1">
    <property type="nucleotide sequence ID" value="NC_011891.1"/>
</dbReference>
<dbReference type="SMR" id="B8JDF0"/>
<dbReference type="KEGG" id="acp:A2cp1_2662"/>
<dbReference type="HOGENOM" id="CLU_013640_2_0_7"/>
<dbReference type="UniPathway" id="UPA00070">
    <property type="reaction ID" value="UER00946"/>
</dbReference>
<dbReference type="Proteomes" id="UP000007089">
    <property type="component" value="Chromosome"/>
</dbReference>
<dbReference type="GO" id="GO:0005737">
    <property type="term" value="C:cytoplasm"/>
    <property type="evidence" value="ECO:0007669"/>
    <property type="project" value="InterPro"/>
</dbReference>
<dbReference type="GO" id="GO:0005886">
    <property type="term" value="C:plasma membrane"/>
    <property type="evidence" value="ECO:0007669"/>
    <property type="project" value="UniProtKB-SubCell"/>
</dbReference>
<dbReference type="GO" id="GO:0106430">
    <property type="term" value="F:dihydroorotate dehydrogenase (quinone) activity"/>
    <property type="evidence" value="ECO:0007669"/>
    <property type="project" value="UniProtKB-EC"/>
</dbReference>
<dbReference type="GO" id="GO:0006207">
    <property type="term" value="P:'de novo' pyrimidine nucleobase biosynthetic process"/>
    <property type="evidence" value="ECO:0007669"/>
    <property type="project" value="InterPro"/>
</dbReference>
<dbReference type="GO" id="GO:0044205">
    <property type="term" value="P:'de novo' UMP biosynthetic process"/>
    <property type="evidence" value="ECO:0007669"/>
    <property type="project" value="UniProtKB-UniRule"/>
</dbReference>
<dbReference type="CDD" id="cd04738">
    <property type="entry name" value="DHOD_2_like"/>
    <property type="match status" value="1"/>
</dbReference>
<dbReference type="Gene3D" id="3.20.20.70">
    <property type="entry name" value="Aldolase class I"/>
    <property type="match status" value="1"/>
</dbReference>
<dbReference type="HAMAP" id="MF_00225">
    <property type="entry name" value="DHO_dh_type2"/>
    <property type="match status" value="1"/>
</dbReference>
<dbReference type="InterPro" id="IPR013785">
    <property type="entry name" value="Aldolase_TIM"/>
</dbReference>
<dbReference type="InterPro" id="IPR050074">
    <property type="entry name" value="DHO_dehydrogenase"/>
</dbReference>
<dbReference type="InterPro" id="IPR005719">
    <property type="entry name" value="Dihydroorotate_DH_2"/>
</dbReference>
<dbReference type="InterPro" id="IPR005720">
    <property type="entry name" value="Dihydroorotate_DH_cat"/>
</dbReference>
<dbReference type="InterPro" id="IPR001295">
    <property type="entry name" value="Dihydroorotate_DH_CS"/>
</dbReference>
<dbReference type="NCBIfam" id="NF003645">
    <property type="entry name" value="PRK05286.1-2"/>
    <property type="match status" value="1"/>
</dbReference>
<dbReference type="NCBIfam" id="NF003652">
    <property type="entry name" value="PRK05286.2-5"/>
    <property type="match status" value="1"/>
</dbReference>
<dbReference type="NCBIfam" id="TIGR01036">
    <property type="entry name" value="pyrD_sub2"/>
    <property type="match status" value="1"/>
</dbReference>
<dbReference type="PANTHER" id="PTHR48109:SF4">
    <property type="entry name" value="DIHYDROOROTATE DEHYDROGENASE (QUINONE), MITOCHONDRIAL"/>
    <property type="match status" value="1"/>
</dbReference>
<dbReference type="PANTHER" id="PTHR48109">
    <property type="entry name" value="DIHYDROOROTATE DEHYDROGENASE (QUINONE), MITOCHONDRIAL-RELATED"/>
    <property type="match status" value="1"/>
</dbReference>
<dbReference type="Pfam" id="PF01180">
    <property type="entry name" value="DHO_dh"/>
    <property type="match status" value="1"/>
</dbReference>
<dbReference type="SUPFAM" id="SSF51395">
    <property type="entry name" value="FMN-linked oxidoreductases"/>
    <property type="match status" value="1"/>
</dbReference>
<dbReference type="PROSITE" id="PS00911">
    <property type="entry name" value="DHODEHASE_1"/>
    <property type="match status" value="1"/>
</dbReference>
<dbReference type="PROSITE" id="PS00912">
    <property type="entry name" value="DHODEHASE_2"/>
    <property type="match status" value="1"/>
</dbReference>
<feature type="chain" id="PRO_1000195061" description="Dihydroorotate dehydrogenase (quinone)">
    <location>
        <begin position="1"/>
        <end position="364"/>
    </location>
</feature>
<feature type="active site" description="Nucleophile" evidence="1">
    <location>
        <position position="178"/>
    </location>
</feature>
<feature type="binding site" evidence="1">
    <location>
        <begin position="62"/>
        <end position="66"/>
    </location>
    <ligand>
        <name>FMN</name>
        <dbReference type="ChEBI" id="CHEBI:58210"/>
    </ligand>
</feature>
<feature type="binding site" evidence="1">
    <location>
        <position position="66"/>
    </location>
    <ligand>
        <name>substrate</name>
    </ligand>
</feature>
<feature type="binding site" evidence="1">
    <location>
        <position position="86"/>
    </location>
    <ligand>
        <name>FMN</name>
        <dbReference type="ChEBI" id="CHEBI:58210"/>
    </ligand>
</feature>
<feature type="binding site" evidence="1">
    <location>
        <begin position="111"/>
        <end position="115"/>
    </location>
    <ligand>
        <name>substrate</name>
    </ligand>
</feature>
<feature type="binding site" evidence="1">
    <location>
        <position position="142"/>
    </location>
    <ligand>
        <name>FMN</name>
        <dbReference type="ChEBI" id="CHEBI:58210"/>
    </ligand>
</feature>
<feature type="binding site" evidence="1">
    <location>
        <position position="175"/>
    </location>
    <ligand>
        <name>FMN</name>
        <dbReference type="ChEBI" id="CHEBI:58210"/>
    </ligand>
</feature>
<feature type="binding site" evidence="1">
    <location>
        <position position="175"/>
    </location>
    <ligand>
        <name>substrate</name>
    </ligand>
</feature>
<feature type="binding site" evidence="1">
    <location>
        <position position="180"/>
    </location>
    <ligand>
        <name>substrate</name>
    </ligand>
</feature>
<feature type="binding site" evidence="1">
    <location>
        <position position="216"/>
    </location>
    <ligand>
        <name>FMN</name>
        <dbReference type="ChEBI" id="CHEBI:58210"/>
    </ligand>
</feature>
<feature type="binding site" evidence="1">
    <location>
        <position position="244"/>
    </location>
    <ligand>
        <name>FMN</name>
        <dbReference type="ChEBI" id="CHEBI:58210"/>
    </ligand>
</feature>
<feature type="binding site" evidence="1">
    <location>
        <begin position="245"/>
        <end position="246"/>
    </location>
    <ligand>
        <name>substrate</name>
    </ligand>
</feature>
<feature type="binding site" evidence="1">
    <location>
        <position position="267"/>
    </location>
    <ligand>
        <name>FMN</name>
        <dbReference type="ChEBI" id="CHEBI:58210"/>
    </ligand>
</feature>
<feature type="binding site" evidence="1">
    <location>
        <position position="296"/>
    </location>
    <ligand>
        <name>FMN</name>
        <dbReference type="ChEBI" id="CHEBI:58210"/>
    </ligand>
</feature>
<feature type="binding site" evidence="1">
    <location>
        <begin position="317"/>
        <end position="318"/>
    </location>
    <ligand>
        <name>FMN</name>
        <dbReference type="ChEBI" id="CHEBI:58210"/>
    </ligand>
</feature>